<organism>
    <name type="scientific">Helicobacter acinonychis (strain Sheeba)</name>
    <dbReference type="NCBI Taxonomy" id="382638"/>
    <lineage>
        <taxon>Bacteria</taxon>
        <taxon>Pseudomonadati</taxon>
        <taxon>Campylobacterota</taxon>
        <taxon>Epsilonproteobacteria</taxon>
        <taxon>Campylobacterales</taxon>
        <taxon>Helicobacteraceae</taxon>
        <taxon>Helicobacter</taxon>
    </lineage>
</organism>
<gene>
    <name evidence="1" type="primary">rpmA</name>
    <name type="ordered locus">Hac_0558</name>
</gene>
<protein>
    <recommendedName>
        <fullName evidence="1">Large ribosomal subunit protein bL27</fullName>
    </recommendedName>
    <alternativeName>
        <fullName evidence="3">50S ribosomal protein L27</fullName>
    </alternativeName>
</protein>
<name>RL27_HELAH</name>
<accession>Q17Y99</accession>
<reference key="1">
    <citation type="journal article" date="2006" name="PLoS Genet.">
        <title>Who ate whom? Adaptive Helicobacter genomic changes that accompanied a host jump from early humans to large felines.</title>
        <authorList>
            <person name="Eppinger M."/>
            <person name="Baar C."/>
            <person name="Linz B."/>
            <person name="Raddatz G."/>
            <person name="Lanz C."/>
            <person name="Keller H."/>
            <person name="Morelli G."/>
            <person name="Gressmann H."/>
            <person name="Achtman M."/>
            <person name="Schuster S.C."/>
        </authorList>
    </citation>
    <scope>NUCLEOTIDE SEQUENCE [LARGE SCALE GENOMIC DNA]</scope>
    <source>
        <strain>Sheeba</strain>
    </source>
</reference>
<dbReference type="EMBL" id="AM260522">
    <property type="protein sequence ID" value="CAJ99377.1"/>
    <property type="molecule type" value="Genomic_DNA"/>
</dbReference>
<dbReference type="RefSeq" id="WP_011577491.1">
    <property type="nucleotide sequence ID" value="NC_008229.1"/>
</dbReference>
<dbReference type="SMR" id="Q17Y99"/>
<dbReference type="STRING" id="382638.Hac_0558"/>
<dbReference type="GeneID" id="31758038"/>
<dbReference type="KEGG" id="hac:Hac_0558"/>
<dbReference type="eggNOG" id="COG0211">
    <property type="taxonomic scope" value="Bacteria"/>
</dbReference>
<dbReference type="HOGENOM" id="CLU_095424_4_0_7"/>
<dbReference type="OrthoDB" id="9803474at2"/>
<dbReference type="BioCyc" id="HACI382638:HAC_RS02470-MONOMER"/>
<dbReference type="Proteomes" id="UP000000775">
    <property type="component" value="Chromosome"/>
</dbReference>
<dbReference type="GO" id="GO:0022625">
    <property type="term" value="C:cytosolic large ribosomal subunit"/>
    <property type="evidence" value="ECO:0007669"/>
    <property type="project" value="TreeGrafter"/>
</dbReference>
<dbReference type="GO" id="GO:0003735">
    <property type="term" value="F:structural constituent of ribosome"/>
    <property type="evidence" value="ECO:0007669"/>
    <property type="project" value="InterPro"/>
</dbReference>
<dbReference type="GO" id="GO:0006412">
    <property type="term" value="P:translation"/>
    <property type="evidence" value="ECO:0007669"/>
    <property type="project" value="UniProtKB-UniRule"/>
</dbReference>
<dbReference type="FunFam" id="2.40.50.100:FF:000026">
    <property type="entry name" value="50S ribosomal protein L27"/>
    <property type="match status" value="1"/>
</dbReference>
<dbReference type="Gene3D" id="2.40.50.100">
    <property type="match status" value="1"/>
</dbReference>
<dbReference type="HAMAP" id="MF_00539">
    <property type="entry name" value="Ribosomal_bL27"/>
    <property type="match status" value="1"/>
</dbReference>
<dbReference type="InterPro" id="IPR001684">
    <property type="entry name" value="Ribosomal_bL27"/>
</dbReference>
<dbReference type="InterPro" id="IPR018261">
    <property type="entry name" value="Ribosomal_bL27_CS"/>
</dbReference>
<dbReference type="NCBIfam" id="TIGR00062">
    <property type="entry name" value="L27"/>
    <property type="match status" value="1"/>
</dbReference>
<dbReference type="PANTHER" id="PTHR15893:SF0">
    <property type="entry name" value="LARGE RIBOSOMAL SUBUNIT PROTEIN BL27M"/>
    <property type="match status" value="1"/>
</dbReference>
<dbReference type="PANTHER" id="PTHR15893">
    <property type="entry name" value="RIBOSOMAL PROTEIN L27"/>
    <property type="match status" value="1"/>
</dbReference>
<dbReference type="Pfam" id="PF01016">
    <property type="entry name" value="Ribosomal_L27"/>
    <property type="match status" value="1"/>
</dbReference>
<dbReference type="PRINTS" id="PR00063">
    <property type="entry name" value="RIBOSOMALL27"/>
</dbReference>
<dbReference type="SUPFAM" id="SSF110324">
    <property type="entry name" value="Ribosomal L27 protein-like"/>
    <property type="match status" value="1"/>
</dbReference>
<dbReference type="PROSITE" id="PS00831">
    <property type="entry name" value="RIBOSOMAL_L27"/>
    <property type="match status" value="1"/>
</dbReference>
<proteinExistence type="inferred from homology"/>
<evidence type="ECO:0000255" key="1">
    <source>
        <dbReference type="HAMAP-Rule" id="MF_00539"/>
    </source>
</evidence>
<evidence type="ECO:0000256" key="2">
    <source>
        <dbReference type="SAM" id="MobiDB-lite"/>
    </source>
</evidence>
<evidence type="ECO:0000305" key="3"/>
<keyword id="KW-0687">Ribonucleoprotein</keyword>
<keyword id="KW-0689">Ribosomal protein</keyword>
<sequence>MAHKKGQGSTQNNRDSAGRRLGVKKFGSEFVRAGNIIVRQRGTKMHPGNNVGMGKDHTLYALTDGVVKFEYKDKSRKKVSVISQNFGE</sequence>
<feature type="chain" id="PRO_1000017496" description="Large ribosomal subunit protein bL27">
    <location>
        <begin position="1"/>
        <end position="88"/>
    </location>
</feature>
<feature type="region of interest" description="Disordered" evidence="2">
    <location>
        <begin position="1"/>
        <end position="21"/>
    </location>
</feature>
<comment type="similarity">
    <text evidence="1">Belongs to the bacterial ribosomal protein bL27 family.</text>
</comment>